<feature type="chain" id="PRO_1000090256" description="Small ribosomal subunit protein eS8">
    <location>
        <begin position="1"/>
        <end position="128"/>
    </location>
</feature>
<organism>
    <name type="scientific">Methanococcus maripaludis (strain C6 / ATCC BAA-1332)</name>
    <dbReference type="NCBI Taxonomy" id="444158"/>
    <lineage>
        <taxon>Archaea</taxon>
        <taxon>Methanobacteriati</taxon>
        <taxon>Methanobacteriota</taxon>
        <taxon>Methanomada group</taxon>
        <taxon>Methanococci</taxon>
        <taxon>Methanococcales</taxon>
        <taxon>Methanococcaceae</taxon>
        <taxon>Methanococcus</taxon>
    </lineage>
</organism>
<proteinExistence type="inferred from homology"/>
<name>RS8E_METM6</name>
<reference key="1">
    <citation type="submission" date="2007-10" db="EMBL/GenBank/DDBJ databases">
        <title>Complete sequence of Methanococcus maripaludis C6.</title>
        <authorList>
            <consortium name="US DOE Joint Genome Institute"/>
            <person name="Copeland A."/>
            <person name="Lucas S."/>
            <person name="Lapidus A."/>
            <person name="Barry K."/>
            <person name="Glavina del Rio T."/>
            <person name="Dalin E."/>
            <person name="Tice H."/>
            <person name="Pitluck S."/>
            <person name="Clum A."/>
            <person name="Schmutz J."/>
            <person name="Larimer F."/>
            <person name="Land M."/>
            <person name="Hauser L."/>
            <person name="Kyrpides N."/>
            <person name="Mikhailova N."/>
            <person name="Sieprawska-Lupa M."/>
            <person name="Whitman W.B."/>
            <person name="Richardson P."/>
        </authorList>
    </citation>
    <scope>NUCLEOTIDE SEQUENCE [LARGE SCALE GENOMIC DNA]</scope>
    <source>
        <strain>C6 / ATCC BAA-1332</strain>
    </source>
</reference>
<comment type="subunit">
    <text evidence="1">Part of the 30S ribosomal subunit.</text>
</comment>
<comment type="similarity">
    <text evidence="1">Belongs to the eukaryotic ribosomal protein eS8 family.</text>
</comment>
<accession>A9A907</accession>
<keyword id="KW-0687">Ribonucleoprotein</keyword>
<keyword id="KW-0689">Ribosomal protein</keyword>
<dbReference type="EMBL" id="CP000867">
    <property type="protein sequence ID" value="ABX01830.1"/>
    <property type="molecule type" value="Genomic_DNA"/>
</dbReference>
<dbReference type="SMR" id="A9A907"/>
<dbReference type="STRING" id="444158.MmarC6_1015"/>
<dbReference type="KEGG" id="mmx:MmarC6_1015"/>
<dbReference type="eggNOG" id="arCOG04154">
    <property type="taxonomic scope" value="Archaea"/>
</dbReference>
<dbReference type="HOGENOM" id="CLU_080597_2_1_2"/>
<dbReference type="OrthoDB" id="372305at2157"/>
<dbReference type="PhylomeDB" id="A9A907"/>
<dbReference type="GO" id="GO:1990904">
    <property type="term" value="C:ribonucleoprotein complex"/>
    <property type="evidence" value="ECO:0007669"/>
    <property type="project" value="UniProtKB-KW"/>
</dbReference>
<dbReference type="GO" id="GO:0005840">
    <property type="term" value="C:ribosome"/>
    <property type="evidence" value="ECO:0007669"/>
    <property type="project" value="UniProtKB-KW"/>
</dbReference>
<dbReference type="GO" id="GO:0003735">
    <property type="term" value="F:structural constituent of ribosome"/>
    <property type="evidence" value="ECO:0007669"/>
    <property type="project" value="InterPro"/>
</dbReference>
<dbReference type="GO" id="GO:0006412">
    <property type="term" value="P:translation"/>
    <property type="evidence" value="ECO:0007669"/>
    <property type="project" value="UniProtKB-UniRule"/>
</dbReference>
<dbReference type="CDD" id="cd11382">
    <property type="entry name" value="Ribosomal_S8e"/>
    <property type="match status" value="1"/>
</dbReference>
<dbReference type="FunFam" id="2.40.10.310:FF:000002">
    <property type="entry name" value="30S ribosomal protein S8e"/>
    <property type="match status" value="1"/>
</dbReference>
<dbReference type="Gene3D" id="2.40.10.310">
    <property type="match status" value="1"/>
</dbReference>
<dbReference type="HAMAP" id="MF_00029">
    <property type="entry name" value="Ribosomal_eS8"/>
    <property type="match status" value="1"/>
</dbReference>
<dbReference type="InterPro" id="IPR001047">
    <property type="entry name" value="Ribosomal_eS8"/>
</dbReference>
<dbReference type="InterPro" id="IPR018283">
    <property type="entry name" value="Ribosomal_eS8_CS"/>
</dbReference>
<dbReference type="InterPro" id="IPR020919">
    <property type="entry name" value="Ribosomal_protein_eS8_arc"/>
</dbReference>
<dbReference type="InterPro" id="IPR022309">
    <property type="entry name" value="Ribosomal_Se8/biogenesis_NSA2"/>
</dbReference>
<dbReference type="NCBIfam" id="TIGR00307">
    <property type="entry name" value="eS8"/>
    <property type="match status" value="1"/>
</dbReference>
<dbReference type="PANTHER" id="PTHR10394">
    <property type="entry name" value="40S RIBOSOMAL PROTEIN S8"/>
    <property type="match status" value="1"/>
</dbReference>
<dbReference type="Pfam" id="PF01201">
    <property type="entry name" value="Ribosomal_S8e"/>
    <property type="match status" value="1"/>
</dbReference>
<dbReference type="PROSITE" id="PS01193">
    <property type="entry name" value="RIBOSOMAL_S8E"/>
    <property type="match status" value="1"/>
</dbReference>
<gene>
    <name evidence="1" type="primary">rps8e</name>
    <name type="ordered locus">MmarC6_1015</name>
</gene>
<evidence type="ECO:0000255" key="1">
    <source>
        <dbReference type="HAMAP-Rule" id="MF_00029"/>
    </source>
</evidence>
<evidence type="ECO:0000305" key="2"/>
<protein>
    <recommendedName>
        <fullName evidence="1">Small ribosomal subunit protein eS8</fullName>
    </recommendedName>
    <alternativeName>
        <fullName evidence="2">30S ribosomal protein S8e</fullName>
    </alternativeName>
</protein>
<sequence>MAIWQGASRRLSTGAKVWRAAKKHKREMGRPAAETQVSDRIKRKIVRCRGANLKVKLEKTNYANVFDQANKVCKKVAVTKVLDNKANKHYIRRNVMTKGAIIETEMGKAKVTSRPGQDGVVNAVLLTE</sequence>